<proteinExistence type="inferred from homology"/>
<dbReference type="EC" id="6.3.2.13" evidence="1"/>
<dbReference type="EMBL" id="BX569693">
    <property type="protein sequence ID" value="CAE08205.1"/>
    <property type="molecule type" value="Genomic_DNA"/>
</dbReference>
<dbReference type="RefSeq" id="WP_011128552.1">
    <property type="nucleotide sequence ID" value="NC_005070.1"/>
</dbReference>
<dbReference type="SMR" id="Q7U5L3"/>
<dbReference type="STRING" id="84588.SYNW1690"/>
<dbReference type="KEGG" id="syw:SYNW1690"/>
<dbReference type="eggNOG" id="COG0769">
    <property type="taxonomic scope" value="Bacteria"/>
</dbReference>
<dbReference type="HOGENOM" id="CLU_022291_4_1_3"/>
<dbReference type="UniPathway" id="UPA00219"/>
<dbReference type="Proteomes" id="UP000001422">
    <property type="component" value="Chromosome"/>
</dbReference>
<dbReference type="GO" id="GO:0005737">
    <property type="term" value="C:cytoplasm"/>
    <property type="evidence" value="ECO:0007669"/>
    <property type="project" value="UniProtKB-SubCell"/>
</dbReference>
<dbReference type="GO" id="GO:0005524">
    <property type="term" value="F:ATP binding"/>
    <property type="evidence" value="ECO:0007669"/>
    <property type="project" value="UniProtKB-UniRule"/>
</dbReference>
<dbReference type="GO" id="GO:0000287">
    <property type="term" value="F:magnesium ion binding"/>
    <property type="evidence" value="ECO:0007669"/>
    <property type="project" value="UniProtKB-UniRule"/>
</dbReference>
<dbReference type="GO" id="GO:0008765">
    <property type="term" value="F:UDP-N-acetylmuramoylalanyl-D-glutamate-2,6-diaminopimelate ligase activity"/>
    <property type="evidence" value="ECO:0007669"/>
    <property type="project" value="UniProtKB-UniRule"/>
</dbReference>
<dbReference type="GO" id="GO:0051301">
    <property type="term" value="P:cell division"/>
    <property type="evidence" value="ECO:0007669"/>
    <property type="project" value="UniProtKB-KW"/>
</dbReference>
<dbReference type="GO" id="GO:0071555">
    <property type="term" value="P:cell wall organization"/>
    <property type="evidence" value="ECO:0007669"/>
    <property type="project" value="UniProtKB-KW"/>
</dbReference>
<dbReference type="GO" id="GO:0009252">
    <property type="term" value="P:peptidoglycan biosynthetic process"/>
    <property type="evidence" value="ECO:0007669"/>
    <property type="project" value="UniProtKB-UniRule"/>
</dbReference>
<dbReference type="GO" id="GO:0008360">
    <property type="term" value="P:regulation of cell shape"/>
    <property type="evidence" value="ECO:0007669"/>
    <property type="project" value="UniProtKB-KW"/>
</dbReference>
<dbReference type="FunFam" id="3.90.190.20:FF:000006">
    <property type="entry name" value="UDP-N-acetylmuramoyl-L-alanyl-D-glutamate--2,6-diaminopimelate ligase"/>
    <property type="match status" value="1"/>
</dbReference>
<dbReference type="Gene3D" id="3.90.190.20">
    <property type="entry name" value="Mur ligase, C-terminal domain"/>
    <property type="match status" value="1"/>
</dbReference>
<dbReference type="Gene3D" id="3.40.1190.10">
    <property type="entry name" value="Mur-like, catalytic domain"/>
    <property type="match status" value="1"/>
</dbReference>
<dbReference type="Gene3D" id="3.40.1390.10">
    <property type="entry name" value="MurE/MurF, N-terminal domain"/>
    <property type="match status" value="1"/>
</dbReference>
<dbReference type="HAMAP" id="MF_00208">
    <property type="entry name" value="MurE"/>
    <property type="match status" value="1"/>
</dbReference>
<dbReference type="InterPro" id="IPR036565">
    <property type="entry name" value="Mur-like_cat_sf"/>
</dbReference>
<dbReference type="InterPro" id="IPR004101">
    <property type="entry name" value="Mur_ligase_C"/>
</dbReference>
<dbReference type="InterPro" id="IPR036615">
    <property type="entry name" value="Mur_ligase_C_dom_sf"/>
</dbReference>
<dbReference type="InterPro" id="IPR013221">
    <property type="entry name" value="Mur_ligase_cen"/>
</dbReference>
<dbReference type="InterPro" id="IPR000713">
    <property type="entry name" value="Mur_ligase_N"/>
</dbReference>
<dbReference type="InterPro" id="IPR035911">
    <property type="entry name" value="MurE/MurF_N"/>
</dbReference>
<dbReference type="InterPro" id="IPR005761">
    <property type="entry name" value="UDP-N-AcMur-Glu-dNH2Pim_ligase"/>
</dbReference>
<dbReference type="NCBIfam" id="TIGR01085">
    <property type="entry name" value="murE"/>
    <property type="match status" value="1"/>
</dbReference>
<dbReference type="NCBIfam" id="NF001124">
    <property type="entry name" value="PRK00139.1-2"/>
    <property type="match status" value="1"/>
</dbReference>
<dbReference type="NCBIfam" id="NF001126">
    <property type="entry name" value="PRK00139.1-4"/>
    <property type="match status" value="1"/>
</dbReference>
<dbReference type="PANTHER" id="PTHR23135">
    <property type="entry name" value="MUR LIGASE FAMILY MEMBER"/>
    <property type="match status" value="1"/>
</dbReference>
<dbReference type="PANTHER" id="PTHR23135:SF4">
    <property type="entry name" value="UDP-N-ACETYLMURAMOYL-L-ALANYL-D-GLUTAMATE--2,6-DIAMINOPIMELATE LIGASE MURE HOMOLOG, CHLOROPLASTIC"/>
    <property type="match status" value="1"/>
</dbReference>
<dbReference type="Pfam" id="PF01225">
    <property type="entry name" value="Mur_ligase"/>
    <property type="match status" value="1"/>
</dbReference>
<dbReference type="Pfam" id="PF02875">
    <property type="entry name" value="Mur_ligase_C"/>
    <property type="match status" value="1"/>
</dbReference>
<dbReference type="Pfam" id="PF08245">
    <property type="entry name" value="Mur_ligase_M"/>
    <property type="match status" value="1"/>
</dbReference>
<dbReference type="SUPFAM" id="SSF53623">
    <property type="entry name" value="MurD-like peptide ligases, catalytic domain"/>
    <property type="match status" value="1"/>
</dbReference>
<dbReference type="SUPFAM" id="SSF53244">
    <property type="entry name" value="MurD-like peptide ligases, peptide-binding domain"/>
    <property type="match status" value="1"/>
</dbReference>
<dbReference type="SUPFAM" id="SSF63418">
    <property type="entry name" value="MurE/MurF N-terminal domain"/>
    <property type="match status" value="1"/>
</dbReference>
<accession>Q7U5L3</accession>
<keyword id="KW-0067">ATP-binding</keyword>
<keyword id="KW-0131">Cell cycle</keyword>
<keyword id="KW-0132">Cell division</keyword>
<keyword id="KW-0133">Cell shape</keyword>
<keyword id="KW-0961">Cell wall biogenesis/degradation</keyword>
<keyword id="KW-0963">Cytoplasm</keyword>
<keyword id="KW-0436">Ligase</keyword>
<keyword id="KW-0460">Magnesium</keyword>
<keyword id="KW-0547">Nucleotide-binding</keyword>
<keyword id="KW-0573">Peptidoglycan synthesis</keyword>
<protein>
    <recommendedName>
        <fullName evidence="1">UDP-N-acetylmuramoyl-L-alanyl-D-glutamate--2,6-diaminopimelate ligase</fullName>
        <ecNumber evidence="1">6.3.2.13</ecNumber>
    </recommendedName>
    <alternativeName>
        <fullName evidence="1">Meso-A2pm-adding enzyme</fullName>
    </alternativeName>
    <alternativeName>
        <fullName evidence="1">Meso-diaminopimelate-adding enzyme</fullName>
    </alternativeName>
    <alternativeName>
        <fullName evidence="1">UDP-MurNAc-L-Ala-D-Glu:meso-diaminopimelate ligase</fullName>
    </alternativeName>
    <alternativeName>
        <fullName evidence="1">UDP-MurNAc-tripeptide synthetase</fullName>
    </alternativeName>
    <alternativeName>
        <fullName evidence="1">UDP-N-acetylmuramyl-tripeptide synthetase</fullName>
    </alternativeName>
</protein>
<comment type="function">
    <text evidence="1">Catalyzes the addition of meso-diaminopimelic acid to the nucleotide precursor UDP-N-acetylmuramoyl-L-alanyl-D-glutamate (UMAG) in the biosynthesis of bacterial cell-wall peptidoglycan.</text>
</comment>
<comment type="catalytic activity">
    <reaction evidence="1">
        <text>UDP-N-acetyl-alpha-D-muramoyl-L-alanyl-D-glutamate + meso-2,6-diaminopimelate + ATP = UDP-N-acetyl-alpha-D-muramoyl-L-alanyl-gamma-D-glutamyl-meso-2,6-diaminopimelate + ADP + phosphate + H(+)</text>
        <dbReference type="Rhea" id="RHEA:23676"/>
        <dbReference type="ChEBI" id="CHEBI:15378"/>
        <dbReference type="ChEBI" id="CHEBI:30616"/>
        <dbReference type="ChEBI" id="CHEBI:43474"/>
        <dbReference type="ChEBI" id="CHEBI:57791"/>
        <dbReference type="ChEBI" id="CHEBI:83900"/>
        <dbReference type="ChEBI" id="CHEBI:83905"/>
        <dbReference type="ChEBI" id="CHEBI:456216"/>
        <dbReference type="EC" id="6.3.2.13"/>
    </reaction>
</comment>
<comment type="cofactor">
    <cofactor evidence="1">
        <name>Mg(2+)</name>
        <dbReference type="ChEBI" id="CHEBI:18420"/>
    </cofactor>
</comment>
<comment type="pathway">
    <text evidence="1">Cell wall biogenesis; peptidoglycan biosynthesis.</text>
</comment>
<comment type="subcellular location">
    <subcellularLocation>
        <location evidence="1">Cytoplasm</location>
    </subcellularLocation>
</comment>
<comment type="PTM">
    <text evidence="1">Carboxylation is probably crucial for Mg(2+) binding and, consequently, for the gamma-phosphate positioning of ATP.</text>
</comment>
<comment type="similarity">
    <text evidence="1">Belongs to the MurCDEF family. MurE subfamily.</text>
</comment>
<evidence type="ECO:0000255" key="1">
    <source>
        <dbReference type="HAMAP-Rule" id="MF_00208"/>
    </source>
</evidence>
<feature type="chain" id="PRO_0000101960" description="UDP-N-acetylmuramoyl-L-alanyl-D-glutamate--2,6-diaminopimelate ligase">
    <location>
        <begin position="1"/>
        <end position="500"/>
    </location>
</feature>
<feature type="short sequence motif" description="Meso-diaminopimelate recognition motif">
    <location>
        <begin position="419"/>
        <end position="422"/>
    </location>
</feature>
<feature type="binding site" evidence="1">
    <location>
        <position position="32"/>
    </location>
    <ligand>
        <name>UDP-N-acetyl-alpha-D-muramoyl-L-alanyl-D-glutamate</name>
        <dbReference type="ChEBI" id="CHEBI:83900"/>
    </ligand>
</feature>
<feature type="binding site" evidence="1">
    <location>
        <begin position="117"/>
        <end position="123"/>
    </location>
    <ligand>
        <name>ATP</name>
        <dbReference type="ChEBI" id="CHEBI:30616"/>
    </ligand>
</feature>
<feature type="binding site" evidence="1">
    <location>
        <begin position="159"/>
        <end position="160"/>
    </location>
    <ligand>
        <name>UDP-N-acetyl-alpha-D-muramoyl-L-alanyl-D-glutamate</name>
        <dbReference type="ChEBI" id="CHEBI:83900"/>
    </ligand>
</feature>
<feature type="binding site" evidence="1">
    <location>
        <position position="186"/>
    </location>
    <ligand>
        <name>UDP-N-acetyl-alpha-D-muramoyl-L-alanyl-D-glutamate</name>
        <dbReference type="ChEBI" id="CHEBI:83900"/>
    </ligand>
</feature>
<feature type="binding site" evidence="1">
    <location>
        <position position="192"/>
    </location>
    <ligand>
        <name>UDP-N-acetyl-alpha-D-muramoyl-L-alanyl-D-glutamate</name>
        <dbReference type="ChEBI" id="CHEBI:83900"/>
    </ligand>
</feature>
<feature type="binding site" evidence="1">
    <location>
        <position position="194"/>
    </location>
    <ligand>
        <name>UDP-N-acetyl-alpha-D-muramoyl-L-alanyl-D-glutamate</name>
        <dbReference type="ChEBI" id="CHEBI:83900"/>
    </ligand>
</feature>
<feature type="binding site" evidence="1">
    <location>
        <position position="395"/>
    </location>
    <ligand>
        <name>meso-2,6-diaminopimelate</name>
        <dbReference type="ChEBI" id="CHEBI:57791"/>
    </ligand>
</feature>
<feature type="binding site" evidence="1">
    <location>
        <begin position="419"/>
        <end position="422"/>
    </location>
    <ligand>
        <name>meso-2,6-diaminopimelate</name>
        <dbReference type="ChEBI" id="CHEBI:57791"/>
    </ligand>
</feature>
<feature type="binding site" evidence="1">
    <location>
        <position position="470"/>
    </location>
    <ligand>
        <name>meso-2,6-diaminopimelate</name>
        <dbReference type="ChEBI" id="CHEBI:57791"/>
    </ligand>
</feature>
<feature type="binding site" evidence="1">
    <location>
        <position position="474"/>
    </location>
    <ligand>
        <name>meso-2,6-diaminopimelate</name>
        <dbReference type="ChEBI" id="CHEBI:57791"/>
    </ligand>
</feature>
<feature type="modified residue" description="N6-carboxylysine" evidence="1">
    <location>
        <position position="226"/>
    </location>
</feature>
<gene>
    <name evidence="1" type="primary">murE</name>
    <name type="ordered locus">SYNW1690</name>
</gene>
<reference key="1">
    <citation type="journal article" date="2003" name="Nature">
        <title>The genome of a motile marine Synechococcus.</title>
        <authorList>
            <person name="Palenik B."/>
            <person name="Brahamsha B."/>
            <person name="Larimer F.W."/>
            <person name="Land M.L."/>
            <person name="Hauser L."/>
            <person name="Chain P."/>
            <person name="Lamerdin J.E."/>
            <person name="Regala W."/>
            <person name="Allen E.E."/>
            <person name="McCarren J."/>
            <person name="Paulsen I.T."/>
            <person name="Dufresne A."/>
            <person name="Partensky F."/>
            <person name="Webb E.A."/>
            <person name="Waterbury J."/>
        </authorList>
    </citation>
    <scope>NUCLEOTIDE SEQUENCE [LARGE SCALE GENOMIC DNA]</scope>
    <source>
        <strain>WH8102</strain>
    </source>
</reference>
<organism>
    <name type="scientific">Parasynechococcus marenigrum (strain WH8102)</name>
    <dbReference type="NCBI Taxonomy" id="84588"/>
    <lineage>
        <taxon>Bacteria</taxon>
        <taxon>Bacillati</taxon>
        <taxon>Cyanobacteriota</taxon>
        <taxon>Cyanophyceae</taxon>
        <taxon>Synechococcales</taxon>
        <taxon>Prochlorococcaceae</taxon>
        <taxon>Parasynechococcus</taxon>
        <taxon>Parasynechococcus marenigrum</taxon>
    </lineage>
</organism>
<sequence>MGQSLHALLRDVGLELPAGLADPQLTSITSDSRLVGEGSLFLGLPGERFDGGRFWRQALEAGAAAAVIGPSAAQELPPAADQPVLVLREPVARSIGELAASYWGHPCRRMALIGVTGTNGKTTTTHLIEHLAVRVGQPTALFGTLVNRWPGYSITATHTTSVADRLQAQLAEAASAGSQLAAMEVSSHALVQERVAGCRFAGAVFTNLTQDHLDYHGTMESYYEAKARLFTAPLLDGDGPSAVVNGDDPWGSRLAEQLGGRCWRSSLGDPQAELQMVDLEMTGQGVRGRLLSPAGSGAFCSPLLGRFNLMNLLQAVGVLLQRGLPLAPLLEAVGSFRGVPGRMERVVVNGAESAALPTVLVDYAHTPDGLENALAASRPFTDGRLVCVFGCGGDRDRGKRPQMAAIAARLADRVVVTSDNPRTEDPDQIIADVVAGMPSGTDLSVERDRATAIAEAIADASAADLVLIAGKGHEDYQILGTEKVHFDDREEAEQALRQRQ</sequence>
<name>MURE_PARMW</name>